<proteinExistence type="inferred from homology"/>
<gene>
    <name evidence="1" type="primary">lpxC</name>
    <name type="ordered locus">tlr1790</name>
</gene>
<accession>Q8DI02</accession>
<sequence length="285" mass="30503">MIAASGPTPLVATTQRTLAGTAQWSGVGLHSGQWVALTLQPAAANTGRQFVRLDLEGQPVIPARIEAVKSTQLATELVANGASVRTVEHLLAALAIAGIDNVTIQITGPEVPVLDGSAQPWLEGIQRVGVVPQEAPRPAVILKEPVTIYEGEAFVSAIPAPELRLTYGIDFPYRAIGRQWCSFTPSELATEVAPARTFGFAEQVDYLRSQGLIQGGSLENALVCSASGWVNPPLRFADEPVRHKLLDLWGDLALLGTPPIAHYVAYRASHHLHTQLARAIAQQRV</sequence>
<keyword id="KW-0378">Hydrolase</keyword>
<keyword id="KW-0441">Lipid A biosynthesis</keyword>
<keyword id="KW-0444">Lipid biosynthesis</keyword>
<keyword id="KW-0443">Lipid metabolism</keyword>
<keyword id="KW-0479">Metal-binding</keyword>
<keyword id="KW-1185">Reference proteome</keyword>
<keyword id="KW-0862">Zinc</keyword>
<protein>
    <recommendedName>
        <fullName evidence="1">UDP-3-O-acyl-N-acetylglucosamine deacetylase</fullName>
        <shortName evidence="1">UDP-3-O-acyl-GlcNAc deacetylase</shortName>
        <ecNumber evidence="1">3.5.1.108</ecNumber>
    </recommendedName>
    <alternativeName>
        <fullName evidence="1">UDP-3-O-[R-3-hydroxymyristoyl]-N-acetylglucosamine deacetylase</fullName>
    </alternativeName>
</protein>
<comment type="function">
    <text evidence="1">Catalyzes the hydrolysis of UDP-3-O-myristoyl-N-acetylglucosamine to form UDP-3-O-myristoylglucosamine and acetate, the committed step in lipid A biosynthesis.</text>
</comment>
<comment type="catalytic activity">
    <reaction evidence="1">
        <text>a UDP-3-O-[(3R)-3-hydroxyacyl]-N-acetyl-alpha-D-glucosamine + H2O = a UDP-3-O-[(3R)-3-hydroxyacyl]-alpha-D-glucosamine + acetate</text>
        <dbReference type="Rhea" id="RHEA:67816"/>
        <dbReference type="ChEBI" id="CHEBI:15377"/>
        <dbReference type="ChEBI" id="CHEBI:30089"/>
        <dbReference type="ChEBI" id="CHEBI:137740"/>
        <dbReference type="ChEBI" id="CHEBI:173225"/>
        <dbReference type="EC" id="3.5.1.108"/>
    </reaction>
</comment>
<comment type="cofactor">
    <cofactor evidence="1">
        <name>Zn(2+)</name>
        <dbReference type="ChEBI" id="CHEBI:29105"/>
    </cofactor>
</comment>
<comment type="pathway">
    <text evidence="1">Glycolipid biosynthesis; lipid IV(A) biosynthesis; lipid IV(A) from (3R)-3-hydroxytetradecanoyl-[acyl-carrier-protein] and UDP-N-acetyl-alpha-D-glucosamine: step 2/6.</text>
</comment>
<comment type="similarity">
    <text evidence="1">Belongs to the LpxC family.</text>
</comment>
<feature type="chain" id="PRO_0000191959" description="UDP-3-O-acyl-N-acetylglucosamine deacetylase">
    <location>
        <begin position="1"/>
        <end position="285"/>
    </location>
</feature>
<feature type="active site" description="Proton donor" evidence="1">
    <location>
        <position position="270"/>
    </location>
</feature>
<feature type="binding site" evidence="1">
    <location>
        <position position="89"/>
    </location>
    <ligand>
        <name>Zn(2+)</name>
        <dbReference type="ChEBI" id="CHEBI:29105"/>
    </ligand>
</feature>
<feature type="binding site" evidence="1">
    <location>
        <position position="243"/>
    </location>
    <ligand>
        <name>Zn(2+)</name>
        <dbReference type="ChEBI" id="CHEBI:29105"/>
    </ligand>
</feature>
<feature type="binding site" evidence="1">
    <location>
        <position position="247"/>
    </location>
    <ligand>
        <name>Zn(2+)</name>
        <dbReference type="ChEBI" id="CHEBI:29105"/>
    </ligand>
</feature>
<name>LPXC_THEVB</name>
<organism>
    <name type="scientific">Thermosynechococcus vestitus (strain NIES-2133 / IAM M-273 / BP-1)</name>
    <dbReference type="NCBI Taxonomy" id="197221"/>
    <lineage>
        <taxon>Bacteria</taxon>
        <taxon>Bacillati</taxon>
        <taxon>Cyanobacteriota</taxon>
        <taxon>Cyanophyceae</taxon>
        <taxon>Acaryochloridales</taxon>
        <taxon>Thermosynechococcaceae</taxon>
        <taxon>Thermosynechococcus</taxon>
    </lineage>
</organism>
<dbReference type="EC" id="3.5.1.108" evidence="1"/>
<dbReference type="EMBL" id="BA000039">
    <property type="protein sequence ID" value="BAC09342.1"/>
    <property type="molecule type" value="Genomic_DNA"/>
</dbReference>
<dbReference type="RefSeq" id="NP_682580.1">
    <property type="nucleotide sequence ID" value="NC_004113.1"/>
</dbReference>
<dbReference type="RefSeq" id="WP_011057627.1">
    <property type="nucleotide sequence ID" value="NC_004113.1"/>
</dbReference>
<dbReference type="SMR" id="Q8DI02"/>
<dbReference type="STRING" id="197221.gene:10748395"/>
<dbReference type="EnsemblBacteria" id="BAC09342">
    <property type="protein sequence ID" value="BAC09342"/>
    <property type="gene ID" value="BAC09342"/>
</dbReference>
<dbReference type="KEGG" id="tel:tlr1790"/>
<dbReference type="PATRIC" id="fig|197221.4.peg.1872"/>
<dbReference type="eggNOG" id="COG0774">
    <property type="taxonomic scope" value="Bacteria"/>
</dbReference>
<dbReference type="UniPathway" id="UPA00359">
    <property type="reaction ID" value="UER00478"/>
</dbReference>
<dbReference type="Proteomes" id="UP000000440">
    <property type="component" value="Chromosome"/>
</dbReference>
<dbReference type="GO" id="GO:0016020">
    <property type="term" value="C:membrane"/>
    <property type="evidence" value="ECO:0007669"/>
    <property type="project" value="GOC"/>
</dbReference>
<dbReference type="GO" id="GO:0046872">
    <property type="term" value="F:metal ion binding"/>
    <property type="evidence" value="ECO:0007669"/>
    <property type="project" value="UniProtKB-KW"/>
</dbReference>
<dbReference type="GO" id="GO:0103117">
    <property type="term" value="F:UDP-3-O-acyl-N-acetylglucosamine deacetylase activity"/>
    <property type="evidence" value="ECO:0007669"/>
    <property type="project" value="UniProtKB-UniRule"/>
</dbReference>
<dbReference type="GO" id="GO:0009245">
    <property type="term" value="P:lipid A biosynthetic process"/>
    <property type="evidence" value="ECO:0007669"/>
    <property type="project" value="UniProtKB-UniRule"/>
</dbReference>
<dbReference type="Gene3D" id="3.30.230.20">
    <property type="entry name" value="lpxc deacetylase, domain 1"/>
    <property type="match status" value="1"/>
</dbReference>
<dbReference type="Gene3D" id="3.30.1700.10">
    <property type="entry name" value="lpxc deacetylase, domain 2"/>
    <property type="match status" value="1"/>
</dbReference>
<dbReference type="HAMAP" id="MF_00388">
    <property type="entry name" value="LpxC"/>
    <property type="match status" value="1"/>
</dbReference>
<dbReference type="InterPro" id="IPR020568">
    <property type="entry name" value="Ribosomal_Su5_D2-typ_SF"/>
</dbReference>
<dbReference type="InterPro" id="IPR004463">
    <property type="entry name" value="UDP-acyl_GlcNac_deAcase"/>
</dbReference>
<dbReference type="InterPro" id="IPR011334">
    <property type="entry name" value="UDP-acyl_GlcNac_deAcase_C"/>
</dbReference>
<dbReference type="InterPro" id="IPR015870">
    <property type="entry name" value="UDP-acyl_N-AcGlcN_deAcase_N"/>
</dbReference>
<dbReference type="NCBIfam" id="TIGR00325">
    <property type="entry name" value="lpxC"/>
    <property type="match status" value="1"/>
</dbReference>
<dbReference type="PANTHER" id="PTHR33694">
    <property type="entry name" value="UDP-3-O-ACYL-N-ACETYLGLUCOSAMINE DEACETYLASE 1, MITOCHONDRIAL-RELATED"/>
    <property type="match status" value="1"/>
</dbReference>
<dbReference type="PANTHER" id="PTHR33694:SF1">
    <property type="entry name" value="UDP-3-O-ACYL-N-ACETYLGLUCOSAMINE DEACETYLASE 1, MITOCHONDRIAL-RELATED"/>
    <property type="match status" value="1"/>
</dbReference>
<dbReference type="Pfam" id="PF03331">
    <property type="entry name" value="LpxC"/>
    <property type="match status" value="1"/>
</dbReference>
<dbReference type="SUPFAM" id="SSF54211">
    <property type="entry name" value="Ribosomal protein S5 domain 2-like"/>
    <property type="match status" value="2"/>
</dbReference>
<reference key="1">
    <citation type="journal article" date="2002" name="DNA Res.">
        <title>Complete genome structure of the thermophilic cyanobacterium Thermosynechococcus elongatus BP-1.</title>
        <authorList>
            <person name="Nakamura Y."/>
            <person name="Kaneko T."/>
            <person name="Sato S."/>
            <person name="Ikeuchi M."/>
            <person name="Katoh H."/>
            <person name="Sasamoto S."/>
            <person name="Watanabe A."/>
            <person name="Iriguchi M."/>
            <person name="Kawashima K."/>
            <person name="Kimura T."/>
            <person name="Kishida Y."/>
            <person name="Kiyokawa C."/>
            <person name="Kohara M."/>
            <person name="Matsumoto M."/>
            <person name="Matsuno A."/>
            <person name="Nakazaki N."/>
            <person name="Shimpo S."/>
            <person name="Sugimoto M."/>
            <person name="Takeuchi C."/>
            <person name="Yamada M."/>
            <person name="Tabata S."/>
        </authorList>
    </citation>
    <scope>NUCLEOTIDE SEQUENCE [LARGE SCALE GENOMIC DNA]</scope>
    <source>
        <strain>NIES-2133 / IAM M-273 / BP-1</strain>
    </source>
</reference>
<evidence type="ECO:0000255" key="1">
    <source>
        <dbReference type="HAMAP-Rule" id="MF_00388"/>
    </source>
</evidence>